<evidence type="ECO:0000255" key="1">
    <source>
        <dbReference type="HAMAP-Rule" id="MF_00182"/>
    </source>
</evidence>
<comment type="function">
    <text evidence="1">Attaches a formyl group to the free amino group of methionyl-tRNA(fMet). The formyl group appears to play a dual role in the initiator identity of N-formylmethionyl-tRNA by promoting its recognition by IF2 and preventing the misappropriation of this tRNA by the elongation apparatus.</text>
</comment>
<comment type="catalytic activity">
    <reaction evidence="1">
        <text>L-methionyl-tRNA(fMet) + (6R)-10-formyltetrahydrofolate = N-formyl-L-methionyl-tRNA(fMet) + (6S)-5,6,7,8-tetrahydrofolate + H(+)</text>
        <dbReference type="Rhea" id="RHEA:24380"/>
        <dbReference type="Rhea" id="RHEA-COMP:9952"/>
        <dbReference type="Rhea" id="RHEA-COMP:9953"/>
        <dbReference type="ChEBI" id="CHEBI:15378"/>
        <dbReference type="ChEBI" id="CHEBI:57453"/>
        <dbReference type="ChEBI" id="CHEBI:78530"/>
        <dbReference type="ChEBI" id="CHEBI:78844"/>
        <dbReference type="ChEBI" id="CHEBI:195366"/>
        <dbReference type="EC" id="2.1.2.9"/>
    </reaction>
</comment>
<comment type="similarity">
    <text evidence="1">Belongs to the Fmt family.</text>
</comment>
<feature type="chain" id="PRO_1000020020" description="Methionyl-tRNA formyltransferase">
    <location>
        <begin position="1"/>
        <end position="324"/>
    </location>
</feature>
<feature type="binding site" evidence="1">
    <location>
        <begin position="114"/>
        <end position="117"/>
    </location>
    <ligand>
        <name>(6S)-5,6,7,8-tetrahydrofolate</name>
        <dbReference type="ChEBI" id="CHEBI:57453"/>
    </ligand>
</feature>
<name>FMT_PHOV8</name>
<keyword id="KW-0648">Protein biosynthesis</keyword>
<keyword id="KW-0808">Transferase</keyword>
<gene>
    <name evidence="1" type="primary">fmt</name>
    <name type="ordered locus">BVU_0054</name>
</gene>
<dbReference type="EC" id="2.1.2.9" evidence="1"/>
<dbReference type="EMBL" id="CP000139">
    <property type="protein sequence ID" value="ABR37784.1"/>
    <property type="molecule type" value="Genomic_DNA"/>
</dbReference>
<dbReference type="RefSeq" id="WP_005851165.1">
    <property type="nucleotide sequence ID" value="NZ_JANSWM010000057.1"/>
</dbReference>
<dbReference type="SMR" id="A6KWC4"/>
<dbReference type="STRING" id="435590.BVU_0054"/>
<dbReference type="PaxDb" id="435590-BVU_0054"/>
<dbReference type="GeneID" id="5301024"/>
<dbReference type="KEGG" id="bvu:BVU_0054"/>
<dbReference type="eggNOG" id="COG0223">
    <property type="taxonomic scope" value="Bacteria"/>
</dbReference>
<dbReference type="HOGENOM" id="CLU_033347_1_1_10"/>
<dbReference type="BioCyc" id="BVUL435590:G1G59-58-MONOMER"/>
<dbReference type="Proteomes" id="UP000002861">
    <property type="component" value="Chromosome"/>
</dbReference>
<dbReference type="GO" id="GO:0005829">
    <property type="term" value="C:cytosol"/>
    <property type="evidence" value="ECO:0007669"/>
    <property type="project" value="TreeGrafter"/>
</dbReference>
<dbReference type="GO" id="GO:0004479">
    <property type="term" value="F:methionyl-tRNA formyltransferase activity"/>
    <property type="evidence" value="ECO:0007669"/>
    <property type="project" value="UniProtKB-UniRule"/>
</dbReference>
<dbReference type="CDD" id="cd08646">
    <property type="entry name" value="FMT_core_Met-tRNA-FMT_N"/>
    <property type="match status" value="1"/>
</dbReference>
<dbReference type="CDD" id="cd08704">
    <property type="entry name" value="Met_tRNA_FMT_C"/>
    <property type="match status" value="1"/>
</dbReference>
<dbReference type="Gene3D" id="3.40.50.12230">
    <property type="match status" value="1"/>
</dbReference>
<dbReference type="HAMAP" id="MF_00182">
    <property type="entry name" value="Formyl_trans"/>
    <property type="match status" value="1"/>
</dbReference>
<dbReference type="InterPro" id="IPR005794">
    <property type="entry name" value="Fmt"/>
</dbReference>
<dbReference type="InterPro" id="IPR005793">
    <property type="entry name" value="Formyl_trans_C"/>
</dbReference>
<dbReference type="InterPro" id="IPR002376">
    <property type="entry name" value="Formyl_transf_N"/>
</dbReference>
<dbReference type="InterPro" id="IPR036477">
    <property type="entry name" value="Formyl_transf_N_sf"/>
</dbReference>
<dbReference type="InterPro" id="IPR011034">
    <property type="entry name" value="Formyl_transferase-like_C_sf"/>
</dbReference>
<dbReference type="InterPro" id="IPR044135">
    <property type="entry name" value="Met-tRNA-FMT_C"/>
</dbReference>
<dbReference type="InterPro" id="IPR041711">
    <property type="entry name" value="Met-tRNA-FMT_N"/>
</dbReference>
<dbReference type="NCBIfam" id="TIGR00460">
    <property type="entry name" value="fmt"/>
    <property type="match status" value="1"/>
</dbReference>
<dbReference type="PANTHER" id="PTHR11138">
    <property type="entry name" value="METHIONYL-TRNA FORMYLTRANSFERASE"/>
    <property type="match status" value="1"/>
</dbReference>
<dbReference type="PANTHER" id="PTHR11138:SF5">
    <property type="entry name" value="METHIONYL-TRNA FORMYLTRANSFERASE, MITOCHONDRIAL"/>
    <property type="match status" value="1"/>
</dbReference>
<dbReference type="Pfam" id="PF02911">
    <property type="entry name" value="Formyl_trans_C"/>
    <property type="match status" value="1"/>
</dbReference>
<dbReference type="Pfam" id="PF00551">
    <property type="entry name" value="Formyl_trans_N"/>
    <property type="match status" value="1"/>
</dbReference>
<dbReference type="SUPFAM" id="SSF50486">
    <property type="entry name" value="FMT C-terminal domain-like"/>
    <property type="match status" value="1"/>
</dbReference>
<dbReference type="SUPFAM" id="SSF53328">
    <property type="entry name" value="Formyltransferase"/>
    <property type="match status" value="1"/>
</dbReference>
<reference key="1">
    <citation type="journal article" date="2007" name="PLoS Biol.">
        <title>Evolution of symbiotic bacteria in the distal human intestine.</title>
        <authorList>
            <person name="Xu J."/>
            <person name="Mahowald M.A."/>
            <person name="Ley R.E."/>
            <person name="Lozupone C.A."/>
            <person name="Hamady M."/>
            <person name="Martens E.C."/>
            <person name="Henrissat B."/>
            <person name="Coutinho P.M."/>
            <person name="Minx P."/>
            <person name="Latreille P."/>
            <person name="Cordum H."/>
            <person name="Van Brunt A."/>
            <person name="Kim K."/>
            <person name="Fulton R.S."/>
            <person name="Fulton L.A."/>
            <person name="Clifton S.W."/>
            <person name="Wilson R.K."/>
            <person name="Knight R.D."/>
            <person name="Gordon J.I."/>
        </authorList>
    </citation>
    <scope>NUCLEOTIDE SEQUENCE [LARGE SCALE GENOMIC DNA]</scope>
    <source>
        <strain>ATCC 8482 / DSM 1447 / JCM 5826 / CCUG 4940 / NBRC 14291 / NCTC 11154</strain>
    </source>
</reference>
<protein>
    <recommendedName>
        <fullName evidence="1">Methionyl-tRNA formyltransferase</fullName>
        <ecNumber evidence="1">2.1.2.9</ecNumber>
    </recommendedName>
</protein>
<organism>
    <name type="scientific">Phocaeicola vulgatus (strain ATCC 8482 / DSM 1447 / JCM 5826 / CCUG 4940 / NBRC 14291 / NCTC 11154)</name>
    <name type="common">Bacteroides vulgatus</name>
    <dbReference type="NCBI Taxonomy" id="435590"/>
    <lineage>
        <taxon>Bacteria</taxon>
        <taxon>Pseudomonadati</taxon>
        <taxon>Bacteroidota</taxon>
        <taxon>Bacteroidia</taxon>
        <taxon>Bacteroidales</taxon>
        <taxon>Bacteroidaceae</taxon>
        <taxon>Phocaeicola</taxon>
    </lineage>
</organism>
<accession>A6KWC4</accession>
<proteinExistence type="inferred from homology"/>
<sequence length="324" mass="36636">MEKKDLRIVYMGTPDFAVESLKRLVEGGYNVVGVITMPDKPMGRHGSVLQPSPVKEYAVSQGLRILQPEKLKDEAFIEELRSLQADLQIVVAFRMLPEIVWNMPRLGTFNLHASLLPQYRGAAPINWAVINGDTETGITTFFLKHEIDTGEIIQQVRVPIADTDNVEIVHDKLMYLGGDLVLETVDAILNGSVKPVPQESLIRQETELRPAPKIFKETCRIDWNKGVKQIYDFIRGLSPYPAAWTELCVADGTRQVLKIYETEKVFASHEMNIGDIRTDMKTYFQVAVKDGFINVLTLQLAGKKRMNVADFLRGYRTSDNNKVE</sequence>